<evidence type="ECO:0000255" key="1">
    <source>
        <dbReference type="HAMAP-Rule" id="MF_01704"/>
    </source>
</evidence>
<keyword id="KW-0067">ATP-binding</keyword>
<keyword id="KW-0997">Cell inner membrane</keyword>
<keyword id="KW-1003">Cell membrane</keyword>
<keyword id="KW-0472">Membrane</keyword>
<keyword id="KW-0536">Nodulation</keyword>
<keyword id="KW-0547">Nucleotide-binding</keyword>
<keyword id="KW-1278">Translocase</keyword>
<keyword id="KW-0813">Transport</keyword>
<dbReference type="EC" id="7.6.2.-" evidence="1"/>
<dbReference type="EMBL" id="U53327">
    <property type="protein sequence ID" value="AAB16898.1"/>
    <property type="molecule type" value="Genomic_DNA"/>
</dbReference>
<dbReference type="SMR" id="P72335"/>
<dbReference type="GO" id="GO:0005886">
    <property type="term" value="C:plasma membrane"/>
    <property type="evidence" value="ECO:0007669"/>
    <property type="project" value="UniProtKB-SubCell"/>
</dbReference>
<dbReference type="GO" id="GO:0005524">
    <property type="term" value="F:ATP binding"/>
    <property type="evidence" value="ECO:0007669"/>
    <property type="project" value="UniProtKB-KW"/>
</dbReference>
<dbReference type="GO" id="GO:0016887">
    <property type="term" value="F:ATP hydrolysis activity"/>
    <property type="evidence" value="ECO:0007669"/>
    <property type="project" value="InterPro"/>
</dbReference>
<dbReference type="GO" id="GO:0022857">
    <property type="term" value="F:transmembrane transporter activity"/>
    <property type="evidence" value="ECO:0007669"/>
    <property type="project" value="InterPro"/>
</dbReference>
<dbReference type="CDD" id="cd03263">
    <property type="entry name" value="ABC_subfamily_A"/>
    <property type="match status" value="1"/>
</dbReference>
<dbReference type="FunFam" id="3.40.50.300:FF:000589">
    <property type="entry name" value="ABC transporter, ATP-binding subunit"/>
    <property type="match status" value="1"/>
</dbReference>
<dbReference type="Gene3D" id="3.40.50.300">
    <property type="entry name" value="P-loop containing nucleotide triphosphate hydrolases"/>
    <property type="match status" value="1"/>
</dbReference>
<dbReference type="InterPro" id="IPR003593">
    <property type="entry name" value="AAA+_ATPase"/>
</dbReference>
<dbReference type="InterPro" id="IPR003439">
    <property type="entry name" value="ABC_transporter-like_ATP-bd"/>
</dbReference>
<dbReference type="InterPro" id="IPR017871">
    <property type="entry name" value="ABC_transporter-like_CS"/>
</dbReference>
<dbReference type="InterPro" id="IPR050763">
    <property type="entry name" value="ABC_transporter_ATP-binding"/>
</dbReference>
<dbReference type="InterPro" id="IPR005978">
    <property type="entry name" value="ABC_transptNodI"/>
</dbReference>
<dbReference type="InterPro" id="IPR027417">
    <property type="entry name" value="P-loop_NTPase"/>
</dbReference>
<dbReference type="NCBIfam" id="TIGR01288">
    <property type="entry name" value="nodI"/>
    <property type="match status" value="1"/>
</dbReference>
<dbReference type="NCBIfam" id="NF010059">
    <property type="entry name" value="PRK13536.1"/>
    <property type="match status" value="1"/>
</dbReference>
<dbReference type="NCBIfam" id="NF010060">
    <property type="entry name" value="PRK13537.1"/>
    <property type="match status" value="1"/>
</dbReference>
<dbReference type="PANTHER" id="PTHR42711">
    <property type="entry name" value="ABC TRANSPORTER ATP-BINDING PROTEIN"/>
    <property type="match status" value="1"/>
</dbReference>
<dbReference type="PANTHER" id="PTHR42711:SF5">
    <property type="entry name" value="ABC TRANSPORTER ATP-BINDING PROTEIN NATA"/>
    <property type="match status" value="1"/>
</dbReference>
<dbReference type="Pfam" id="PF00005">
    <property type="entry name" value="ABC_tran"/>
    <property type="match status" value="1"/>
</dbReference>
<dbReference type="SMART" id="SM00382">
    <property type="entry name" value="AAA"/>
    <property type="match status" value="1"/>
</dbReference>
<dbReference type="SUPFAM" id="SSF52540">
    <property type="entry name" value="P-loop containing nucleoside triphosphate hydrolases"/>
    <property type="match status" value="1"/>
</dbReference>
<dbReference type="PROSITE" id="PS00211">
    <property type="entry name" value="ABC_TRANSPORTER_1"/>
    <property type="match status" value="1"/>
</dbReference>
<dbReference type="PROSITE" id="PS50893">
    <property type="entry name" value="ABC_TRANSPORTER_2"/>
    <property type="match status" value="1"/>
</dbReference>
<dbReference type="PROSITE" id="PS51240">
    <property type="entry name" value="NODI"/>
    <property type="match status" value="1"/>
</dbReference>
<gene>
    <name evidence="1" type="primary">nodI</name>
</gene>
<organism>
    <name type="scientific">Rhizobium sp. (strain N33)</name>
    <dbReference type="NCBI Taxonomy" id="103798"/>
    <lineage>
        <taxon>Bacteria</taxon>
        <taxon>Pseudomonadati</taxon>
        <taxon>Pseudomonadota</taxon>
        <taxon>Alphaproteobacteria</taxon>
        <taxon>Hyphomicrobiales</taxon>
        <taxon>Rhizobiaceae</taxon>
        <taxon>Rhizobium/Agrobacterium group</taxon>
        <taxon>Rhizobium</taxon>
    </lineage>
</organism>
<reference key="1">
    <citation type="journal article" date="1996" name="Mol. Plant Microbe Interact.">
        <title>Sequence and mutational analysis of the common nodBCIJ region of Rhizobium sp. (Oxytropis arctobia) strain N33, a nitrogen-fixing microsymbiont of both arctic and temperate legumes.</title>
        <authorList>
            <person name="Cloutier J."/>
            <person name="Laberge S."/>
            <person name="Prevost D."/>
            <person name="Antoun H."/>
        </authorList>
    </citation>
    <scope>NUCLEOTIDE SEQUENCE [GENOMIC DNA]</scope>
</reference>
<name>NODI_RHIS3</name>
<protein>
    <recommendedName>
        <fullName evidence="1">Nod factor export ATP-binding protein I</fullName>
        <ecNumber evidence="1">7.6.2.-</ecNumber>
    </recommendedName>
    <alternativeName>
        <fullName evidence="1">Nodulation ATP-binding protein I</fullName>
    </alternativeName>
</protein>
<accession>P72335</accession>
<comment type="function">
    <text evidence="1">Part of the ABC transporter complex NodIJ involved in the export of the nodulation factors (Nod factors), the bacterial signal molecules that induce symbiosis and subsequent nodulation induction. Nod factors are LCO (lipo-chitin oligosaccharide), a modified beta-1,4-linked N-acetylglucosamine oligosaccharide. This subunit is responsible for energy coupling to the transport system.</text>
</comment>
<comment type="subunit">
    <text evidence="1">The complex is composed of two ATP-binding proteins (NodI) and two transmembrane proteins (NodJ).</text>
</comment>
<comment type="subcellular location">
    <subcellularLocation>
        <location evidence="1">Cell inner membrane</location>
        <topology evidence="1">Peripheral membrane protein</topology>
    </subcellularLocation>
</comment>
<comment type="similarity">
    <text evidence="1">Belongs to the ABC transporter superfamily. Lipooligosaccharide exporter (TC 3.A.1.102) family.</text>
</comment>
<sequence length="304" mass="33698">MSKVAIDLAGVKKSFGDKLVVNGLSFTVASGECFGLLGPNGAGKSTIARMLLGMTVPDAGKITVLGEPVGARSRLARKSIGVVPQFDNLDQEFTVRENLLVFGRYFGMSTRKIKEVIPSLLEFARLESKADARVGELSGGMKRRLTLARALINDPQLLVMDEPTTGLDPHARHLIWERLRFLLARGKTIILTTHFMEEAERLCDRLCVLEHGRKLAEGSPHALIEEHIGCQVIEIFGGNPQELVSLIRPYVQRVEVSGETLFCYTADPEQVRVQLRGRAGLRLLERPPSLEDVFLRLTGREMEK</sequence>
<proteinExistence type="inferred from homology"/>
<feature type="chain" id="PRO_0000092644" description="Nod factor export ATP-binding protein I">
    <location>
        <begin position="1"/>
        <end position="304"/>
    </location>
</feature>
<feature type="domain" description="ABC transporter" evidence="1">
    <location>
        <begin position="6"/>
        <end position="236"/>
    </location>
</feature>
<feature type="binding site" evidence="1">
    <location>
        <begin position="38"/>
        <end position="45"/>
    </location>
    <ligand>
        <name>ATP</name>
        <dbReference type="ChEBI" id="CHEBI:30616"/>
    </ligand>
</feature>